<gene>
    <name type="ordered locus">Os01g0208600</name>
    <name type="ordered locus">LOC_Os01g11040</name>
    <name type="ORF">OSJNBa0016I09.25</name>
</gene>
<comment type="function">
    <text evidence="1">Involved in regulation of actin and microtubule organization. Part of a WAVE complex that activates the Arp2/3 complex (By similarity).</text>
</comment>
<comment type="subcellular location">
    <subcellularLocation>
        <location evidence="1">Cytoplasm</location>
        <location evidence="1">Cytoskeleton</location>
    </subcellularLocation>
</comment>
<comment type="similarity">
    <text evidence="4">Belongs to the SCAR/WAVE family.</text>
</comment>
<keyword id="KW-0009">Actin-binding</keyword>
<keyword id="KW-0963">Cytoplasm</keyword>
<keyword id="KW-0206">Cytoskeleton</keyword>
<keyword id="KW-1185">Reference proteome</keyword>
<sequence length="1334" mass="144358">MPLVRFEVRNEVGLGDPDLYGGGGGGGGGGGGGGVGAAAKKGGEAEPKALLEGVAVAGLVGILRQLGDLAEFAADVFHDLHEQVITTSARGRKVLTRVQNIEAALPSLEKAVKNQKSHIHFTYVPGSDWHAQLKDEQNHLLSSDLPRFMMDSYEECRDPPRLYLLDKFDNAGAGACSRRHSDPSYFKKAWDMMRADKTGNFQREKKSQKIKRKGSRLREPYHGQTTPRQRNGELQRALTAVQLTSRHFATPSTDGRSLSENRSTSDVRSNPDNISRSSSFSSKARLSFTEQVLDTKPTVVPHENGHDKLSNNNLHKLSNTPLHTRLNGTSADDLGDDLKQSSLLDDMTARSPSVKWDEKAEITMSTTSVYCDDVVMDKAEHVQSKCISPEQQEIDHREMETLEQQEALHQKAKQLLVSSGLNHHDEVPSETDNYVDALNTLESETETEPELQTKSRVKPVPSLNVDVPQVELIDNIVTESPDSSVAEFPDAYQNSSMPPAPESAADFPSLSSADAPDISEPVLSGYTANPHPEVSAIATNTPVSNTEDAPGPLEISESASRAYIITLPNQSLPDSKEIPDSKAEDAPIDSPEKLEPGPSSYTPTIPIKESSIVSQNTNAENVSGDCSEGTACAISYSQHIISDKPTNEVSATNSSPDDTSSDEDTVESGGIVEVSNSQPMPLNDSLENGCATQGLPANAPTNSTGVSSVKLWTNAGLFGLEPSKPPVFGAHDGPKEDTTPGHTQPQLCHSTGCPEVHFSKPTESAQVYVPNGNSPITSSFVGKLVGICPGSTSHSSETNQSTVRTPDTVIGQTEGSTGCSTSFEHSDHKNIIGKQTSISELLESEDSAENGAEMFSKTDMTGRNNMNQVSASSFSSIAQRFLANTLQRRTPKYTDLPMSSVIVNTDANGTDESTQISSLAPNETTFEASQFEKKTENDTNGLPKSSLFSSSHYSEKSSPPLEYMKISFHPMSAFEMSKLDLDFSDENLHENADDMMLPTFQLLPGSSVPQLGSGSESEDDTFGRSYSYSSYDDLSPRLYSNSELWDQEDANGLEDHDMHNNPNQIGSFGAPISSFVEFEQMDLSGAKSTVSLTDLGDDNGLGTLDSHPAGELPNFDTLMAHQNEAFIPHNPVSLSPDEGQLPPPPPLPPMQWRTMRQVASVEEGRGSAAKEDMLESTSDLPPVHTPVQEEHLLPIAPPDQQNLLPIAPPDQQGHAKENDRKVDGVKEISNPLDIEIRASLLQQIRDKSGQQKLNGHEKSKAVGNDTKNLDEREELLQQIRSKTFNLRRTNASKTNTSSPTTANSSVVAILEKANAIRQAVASDEGGDDDSWSDI</sequence>
<feature type="chain" id="PRO_0000189010" description="SCAR-like protein 2">
    <location>
        <begin position="1"/>
        <end position="1334"/>
    </location>
</feature>
<feature type="domain" description="WH2" evidence="2">
    <location>
        <begin position="1271"/>
        <end position="1289"/>
    </location>
</feature>
<feature type="region of interest" description="Disordered" evidence="3">
    <location>
        <begin position="197"/>
        <end position="281"/>
    </location>
</feature>
<feature type="region of interest" description="Disordered" evidence="3">
    <location>
        <begin position="294"/>
        <end position="331"/>
    </location>
</feature>
<feature type="region of interest" description="Disordered" evidence="3">
    <location>
        <begin position="481"/>
        <end position="516"/>
    </location>
</feature>
<feature type="region of interest" description="Disordered" evidence="3">
    <location>
        <begin position="568"/>
        <end position="602"/>
    </location>
</feature>
<feature type="region of interest" description="Disordered" evidence="3">
    <location>
        <begin position="643"/>
        <end position="668"/>
    </location>
</feature>
<feature type="region of interest" description="Disordered" evidence="3">
    <location>
        <begin position="791"/>
        <end position="832"/>
    </location>
</feature>
<feature type="region of interest" description="Disordered" evidence="3">
    <location>
        <begin position="931"/>
        <end position="956"/>
    </location>
</feature>
<feature type="region of interest" description="Disordered" evidence="3">
    <location>
        <begin position="1000"/>
        <end position="1026"/>
    </location>
</feature>
<feature type="region of interest" description="Disordered" evidence="3">
    <location>
        <begin position="1248"/>
        <end position="1268"/>
    </location>
</feature>
<feature type="region of interest" description="Disordered" evidence="3">
    <location>
        <begin position="1280"/>
        <end position="1304"/>
    </location>
</feature>
<feature type="compositionally biased region" description="Basic and acidic residues" evidence="3">
    <location>
        <begin position="197"/>
        <end position="207"/>
    </location>
</feature>
<feature type="compositionally biased region" description="Polar residues" evidence="3">
    <location>
        <begin position="241"/>
        <end position="256"/>
    </location>
</feature>
<feature type="compositionally biased region" description="Low complexity" evidence="3">
    <location>
        <begin position="310"/>
        <end position="319"/>
    </location>
</feature>
<feature type="compositionally biased region" description="Polar residues" evidence="3">
    <location>
        <begin position="320"/>
        <end position="330"/>
    </location>
</feature>
<feature type="compositionally biased region" description="Basic and acidic residues" evidence="3">
    <location>
        <begin position="574"/>
        <end position="595"/>
    </location>
</feature>
<feature type="compositionally biased region" description="Polar residues" evidence="3">
    <location>
        <begin position="791"/>
        <end position="823"/>
    </location>
</feature>
<feature type="compositionally biased region" description="Low complexity" evidence="3">
    <location>
        <begin position="945"/>
        <end position="956"/>
    </location>
</feature>
<feature type="compositionally biased region" description="Basic and acidic residues" evidence="3">
    <location>
        <begin position="1248"/>
        <end position="1260"/>
    </location>
</feature>
<feature type="compositionally biased region" description="Low complexity" evidence="3">
    <location>
        <begin position="1289"/>
        <end position="1304"/>
    </location>
</feature>
<feature type="sequence conflict" description="In Ref. 5; AK120865." evidence="4" ref="5">
    <original>G</original>
    <variation>R</variation>
    <location>
        <position position="32"/>
    </location>
</feature>
<feature type="sequence conflict" description="In Ref. 5; AK120865." evidence="4" ref="5">
    <original>A</original>
    <variation>V</variation>
    <location>
        <position position="38"/>
    </location>
</feature>
<feature type="sequence conflict" description="In Ref. 5; AK120865." evidence="4" ref="5">
    <original>K</original>
    <variation>E</variation>
    <location>
        <position position="209"/>
    </location>
</feature>
<feature type="sequence conflict" description="In Ref. 5; AK120865." evidence="4" ref="5">
    <original>P</original>
    <variation>S</variation>
    <location>
        <position position="598"/>
    </location>
</feature>
<feature type="sequence conflict" description="In Ref. 5; AK067713." evidence="4" ref="5">
    <original>Y</original>
    <variation>C</variation>
    <location>
        <position position="768"/>
    </location>
</feature>
<feature type="sequence conflict" description="In Ref. 5; AK067713." evidence="4" ref="5">
    <original>S</original>
    <variation>T</variation>
    <location>
        <position position="870"/>
    </location>
</feature>
<feature type="sequence conflict" description="In Ref. 5; AK067713." evidence="4" ref="5">
    <original>Q</original>
    <variation>K</variation>
    <location>
        <position position="915"/>
    </location>
</feature>
<feature type="sequence conflict" description="In Ref. 5; AK104676." evidence="4" ref="5">
    <original>A</original>
    <variation>V</variation>
    <location>
        <position position="1315"/>
    </location>
</feature>
<evidence type="ECO:0000250" key="1"/>
<evidence type="ECO:0000255" key="2">
    <source>
        <dbReference type="PROSITE-ProRule" id="PRU00406"/>
    </source>
</evidence>
<evidence type="ECO:0000256" key="3">
    <source>
        <dbReference type="SAM" id="MobiDB-lite"/>
    </source>
</evidence>
<evidence type="ECO:0000305" key="4"/>
<organism>
    <name type="scientific">Oryza sativa subsp. japonica</name>
    <name type="common">Rice</name>
    <dbReference type="NCBI Taxonomy" id="39947"/>
    <lineage>
        <taxon>Eukaryota</taxon>
        <taxon>Viridiplantae</taxon>
        <taxon>Streptophyta</taxon>
        <taxon>Embryophyta</taxon>
        <taxon>Tracheophyta</taxon>
        <taxon>Spermatophyta</taxon>
        <taxon>Magnoliopsida</taxon>
        <taxon>Liliopsida</taxon>
        <taxon>Poales</taxon>
        <taxon>Poaceae</taxon>
        <taxon>BOP clade</taxon>
        <taxon>Oryzoideae</taxon>
        <taxon>Oryzeae</taxon>
        <taxon>Oryzinae</taxon>
        <taxon>Oryza</taxon>
        <taxon>Oryza sativa</taxon>
    </lineage>
</organism>
<proteinExistence type="evidence at transcript level"/>
<name>SCRL2_ORYSJ</name>
<dbReference type="EMBL" id="AP003052">
    <property type="protein sequence ID" value="BAD73100.1"/>
    <property type="molecule type" value="Genomic_DNA"/>
</dbReference>
<dbReference type="EMBL" id="AP008207">
    <property type="protein sequence ID" value="BAH90957.1"/>
    <property type="molecule type" value="Genomic_DNA"/>
</dbReference>
<dbReference type="EMBL" id="AP014957">
    <property type="protein sequence ID" value="BAS70961.1"/>
    <property type="molecule type" value="Genomic_DNA"/>
</dbReference>
<dbReference type="EMBL" id="AK067713">
    <property type="status" value="NOT_ANNOTATED_CDS"/>
    <property type="molecule type" value="mRNA"/>
</dbReference>
<dbReference type="EMBL" id="AK104676">
    <property type="status" value="NOT_ANNOTATED_CDS"/>
    <property type="molecule type" value="mRNA"/>
</dbReference>
<dbReference type="EMBL" id="AK120865">
    <property type="status" value="NOT_ANNOTATED_CDS"/>
    <property type="molecule type" value="mRNA"/>
</dbReference>
<dbReference type="RefSeq" id="XP_015649279.1">
    <property type="nucleotide sequence ID" value="XM_015793793.1"/>
</dbReference>
<dbReference type="FunCoup" id="Q5QNA6">
    <property type="interactions" value="943"/>
</dbReference>
<dbReference type="STRING" id="39947.Q5QNA6"/>
<dbReference type="PaxDb" id="39947-Q5QNA6"/>
<dbReference type="EnsemblPlants" id="Os01t0208600-01">
    <property type="protein sequence ID" value="Os01t0208600-01"/>
    <property type="gene ID" value="Os01g0208600"/>
</dbReference>
<dbReference type="Gramene" id="Os01t0208600-01">
    <property type="protein sequence ID" value="Os01t0208600-01"/>
    <property type="gene ID" value="Os01g0208600"/>
</dbReference>
<dbReference type="KEGG" id="dosa:Os01g0208600"/>
<dbReference type="eggNOG" id="ENOG502QSPV">
    <property type="taxonomic scope" value="Eukaryota"/>
</dbReference>
<dbReference type="HOGENOM" id="CLU_005038_1_0_1"/>
<dbReference type="InParanoid" id="Q5QNA6"/>
<dbReference type="OMA" id="HENADDM"/>
<dbReference type="OrthoDB" id="753427at2759"/>
<dbReference type="Proteomes" id="UP000000763">
    <property type="component" value="Chromosome 1"/>
</dbReference>
<dbReference type="Proteomes" id="UP000059680">
    <property type="component" value="Chromosome 1"/>
</dbReference>
<dbReference type="ExpressionAtlas" id="Q5QNA6">
    <property type="expression patterns" value="baseline and differential"/>
</dbReference>
<dbReference type="GO" id="GO:0005737">
    <property type="term" value="C:cytoplasm"/>
    <property type="evidence" value="ECO:0007669"/>
    <property type="project" value="UniProtKB-KW"/>
</dbReference>
<dbReference type="GO" id="GO:0005856">
    <property type="term" value="C:cytoskeleton"/>
    <property type="evidence" value="ECO:0007669"/>
    <property type="project" value="UniProtKB-SubCell"/>
</dbReference>
<dbReference type="GO" id="GO:0003779">
    <property type="term" value="F:actin binding"/>
    <property type="evidence" value="ECO:0007669"/>
    <property type="project" value="UniProtKB-KW"/>
</dbReference>
<dbReference type="GO" id="GO:0071933">
    <property type="term" value="F:Arp2/3 complex binding"/>
    <property type="evidence" value="ECO:0000318"/>
    <property type="project" value="GO_Central"/>
</dbReference>
<dbReference type="GO" id="GO:0034237">
    <property type="term" value="F:protein kinase A regulatory subunit binding"/>
    <property type="evidence" value="ECO:0000318"/>
    <property type="project" value="GO_Central"/>
</dbReference>
<dbReference type="GO" id="GO:0030036">
    <property type="term" value="P:actin cytoskeleton organization"/>
    <property type="evidence" value="ECO:0000318"/>
    <property type="project" value="GO_Central"/>
</dbReference>
<dbReference type="GO" id="GO:2000601">
    <property type="term" value="P:positive regulation of Arp2/3 complex-mediated actin nucleation"/>
    <property type="evidence" value="ECO:0000318"/>
    <property type="project" value="GO_Central"/>
</dbReference>
<dbReference type="Gene3D" id="1.20.5.340">
    <property type="match status" value="1"/>
</dbReference>
<dbReference type="Gene3D" id="6.10.280.150">
    <property type="match status" value="2"/>
</dbReference>
<dbReference type="InterPro" id="IPR028288">
    <property type="entry name" value="SCAR/WAVE_fam"/>
</dbReference>
<dbReference type="InterPro" id="IPR003124">
    <property type="entry name" value="WH2_dom"/>
</dbReference>
<dbReference type="PANTHER" id="PTHR12902:SF33">
    <property type="entry name" value="PROTEIN SCAR3"/>
    <property type="match status" value="1"/>
</dbReference>
<dbReference type="PANTHER" id="PTHR12902">
    <property type="entry name" value="WASP-1"/>
    <property type="match status" value="1"/>
</dbReference>
<dbReference type="PROSITE" id="PS51082">
    <property type="entry name" value="WH2"/>
    <property type="match status" value="1"/>
</dbReference>
<reference key="1">
    <citation type="journal article" date="2002" name="Nature">
        <title>The genome sequence and structure of rice chromosome 1.</title>
        <authorList>
            <person name="Sasaki T."/>
            <person name="Matsumoto T."/>
            <person name="Yamamoto K."/>
            <person name="Sakata K."/>
            <person name="Baba T."/>
            <person name="Katayose Y."/>
            <person name="Wu J."/>
            <person name="Niimura Y."/>
            <person name="Cheng Z."/>
            <person name="Nagamura Y."/>
            <person name="Antonio B.A."/>
            <person name="Kanamori H."/>
            <person name="Hosokawa S."/>
            <person name="Masukawa M."/>
            <person name="Arikawa K."/>
            <person name="Chiden Y."/>
            <person name="Hayashi M."/>
            <person name="Okamoto M."/>
            <person name="Ando T."/>
            <person name="Aoki H."/>
            <person name="Arita K."/>
            <person name="Hamada M."/>
            <person name="Harada C."/>
            <person name="Hijishita S."/>
            <person name="Honda M."/>
            <person name="Ichikawa Y."/>
            <person name="Idonuma A."/>
            <person name="Iijima M."/>
            <person name="Ikeda M."/>
            <person name="Ikeno M."/>
            <person name="Ito S."/>
            <person name="Ito T."/>
            <person name="Ito Y."/>
            <person name="Ito Y."/>
            <person name="Iwabuchi A."/>
            <person name="Kamiya K."/>
            <person name="Karasawa W."/>
            <person name="Katagiri S."/>
            <person name="Kikuta A."/>
            <person name="Kobayashi N."/>
            <person name="Kono I."/>
            <person name="Machita K."/>
            <person name="Maehara T."/>
            <person name="Mizuno H."/>
            <person name="Mizubayashi T."/>
            <person name="Mukai Y."/>
            <person name="Nagasaki H."/>
            <person name="Nakashima M."/>
            <person name="Nakama Y."/>
            <person name="Nakamichi Y."/>
            <person name="Nakamura M."/>
            <person name="Namiki N."/>
            <person name="Negishi M."/>
            <person name="Ohta I."/>
            <person name="Ono N."/>
            <person name="Saji S."/>
            <person name="Sakai K."/>
            <person name="Shibata M."/>
            <person name="Shimokawa T."/>
            <person name="Shomura A."/>
            <person name="Song J."/>
            <person name="Takazaki Y."/>
            <person name="Terasawa K."/>
            <person name="Tsuji K."/>
            <person name="Waki K."/>
            <person name="Yamagata H."/>
            <person name="Yamane H."/>
            <person name="Yoshiki S."/>
            <person name="Yoshihara R."/>
            <person name="Yukawa K."/>
            <person name="Zhong H."/>
            <person name="Iwama H."/>
            <person name="Endo T."/>
            <person name="Ito H."/>
            <person name="Hahn J.H."/>
            <person name="Kim H.-I."/>
            <person name="Eun M.-Y."/>
            <person name="Yano M."/>
            <person name="Jiang J."/>
            <person name="Gojobori T."/>
        </authorList>
    </citation>
    <scope>NUCLEOTIDE SEQUENCE [LARGE SCALE GENOMIC DNA]</scope>
    <source>
        <strain>cv. Nipponbare</strain>
    </source>
</reference>
<reference key="2">
    <citation type="journal article" date="2005" name="Nature">
        <title>The map-based sequence of the rice genome.</title>
        <authorList>
            <consortium name="International rice genome sequencing project (IRGSP)"/>
        </authorList>
    </citation>
    <scope>NUCLEOTIDE SEQUENCE [LARGE SCALE GENOMIC DNA]</scope>
    <source>
        <strain>cv. Nipponbare</strain>
    </source>
</reference>
<reference key="3">
    <citation type="journal article" date="2008" name="Nucleic Acids Res.">
        <title>The rice annotation project database (RAP-DB): 2008 update.</title>
        <authorList>
            <consortium name="The rice annotation project (RAP)"/>
        </authorList>
    </citation>
    <scope>GENOME REANNOTATION</scope>
    <source>
        <strain>cv. Nipponbare</strain>
    </source>
</reference>
<reference key="4">
    <citation type="journal article" date="2013" name="Rice">
        <title>Improvement of the Oryza sativa Nipponbare reference genome using next generation sequence and optical map data.</title>
        <authorList>
            <person name="Kawahara Y."/>
            <person name="de la Bastide M."/>
            <person name="Hamilton J.P."/>
            <person name="Kanamori H."/>
            <person name="McCombie W.R."/>
            <person name="Ouyang S."/>
            <person name="Schwartz D.C."/>
            <person name="Tanaka T."/>
            <person name="Wu J."/>
            <person name="Zhou S."/>
            <person name="Childs K.L."/>
            <person name="Davidson R.M."/>
            <person name="Lin H."/>
            <person name="Quesada-Ocampo L."/>
            <person name="Vaillancourt B."/>
            <person name="Sakai H."/>
            <person name="Lee S.S."/>
            <person name="Kim J."/>
            <person name="Numa H."/>
            <person name="Itoh T."/>
            <person name="Buell C.R."/>
            <person name="Matsumoto T."/>
        </authorList>
    </citation>
    <scope>GENOME REANNOTATION</scope>
    <source>
        <strain>cv. Nipponbare</strain>
    </source>
</reference>
<reference key="5">
    <citation type="journal article" date="2003" name="Science">
        <title>Collection, mapping, and annotation of over 28,000 cDNA clones from japonica rice.</title>
        <authorList>
            <consortium name="The rice full-length cDNA consortium"/>
        </authorList>
    </citation>
    <scope>NUCLEOTIDE SEQUENCE [LARGE SCALE MRNA]</scope>
    <source>
        <strain>cv. Nipponbare</strain>
    </source>
</reference>
<protein>
    <recommendedName>
        <fullName>SCAR-like protein 2</fullName>
    </recommendedName>
</protein>
<accession>Q5QNA6</accession>
<accession>C7IWQ9</accession>